<gene>
    <name evidence="6" type="primary">LIP5</name>
    <name type="ORF">MGL_4052</name>
</gene>
<reference key="1">
    <citation type="journal article" date="2007" name="Proc. Natl. Acad. Sci. U.S.A.">
        <title>Dandruff-associated Malassezia genomes reveal convergent and divergent virulence traits shared with plant and human fungal pathogens.</title>
        <authorList>
            <person name="Xu J."/>
            <person name="Saunders C.W."/>
            <person name="Hu P."/>
            <person name="Grant R.A."/>
            <person name="Boekhout T."/>
            <person name="Kuramae E.E."/>
            <person name="Kronstad J.W."/>
            <person name="DeAngelis Y.M."/>
            <person name="Reeder N.L."/>
            <person name="Johnstone K.R."/>
            <person name="Leland M."/>
            <person name="Fieno A.M."/>
            <person name="Begley W.M."/>
            <person name="Sun Y."/>
            <person name="Lacey M.P."/>
            <person name="Chaudhary T."/>
            <person name="Keough T."/>
            <person name="Chu L."/>
            <person name="Sears R."/>
            <person name="Yuan B."/>
            <person name="Dawson T.L. Jr."/>
        </authorList>
    </citation>
    <scope>NUCLEOTIDE SEQUENCE [LARGE SCALE GENOMIC DNA]</scope>
    <scope>IDENTIFICATION</scope>
    <scope>FUNCTION</scope>
    <source>
        <strain>ATCC MYA-4612 / CBS 7966</strain>
    </source>
</reference>
<reference key="2">
    <citation type="journal article" date="2016" name="Microbiology">
        <title>Secreted lipases from Malassezia globosa: recombinant expression and determination of their substrate specificities.</title>
        <authorList>
            <person name="Sommer B."/>
            <person name="Overy D.P."/>
            <person name="Haltli B."/>
            <person name="Kerr R.G."/>
        </authorList>
    </citation>
    <scope>FUNCTION</scope>
    <scope>CATALYTIC ACTIVITY</scope>
    <scope>SUBSTRATE SPECIFICITY</scope>
</reference>
<dbReference type="EC" id="3.1.1.-" evidence="5"/>
<dbReference type="EC" id="3.1.1.3" evidence="5"/>
<dbReference type="EMBL" id="AAYY01000018">
    <property type="protein sequence ID" value="EDP41671.1"/>
    <property type="molecule type" value="Genomic_DNA"/>
</dbReference>
<dbReference type="RefSeq" id="XP_001728885.1">
    <property type="nucleotide sequence ID" value="XM_001728833.1"/>
</dbReference>
<dbReference type="SMR" id="A8QCV7"/>
<dbReference type="ESTHER" id="malgo-a8qcv7">
    <property type="family name" value="Fungal-Bact_LIP"/>
</dbReference>
<dbReference type="GeneID" id="5853191"/>
<dbReference type="KEGG" id="mgl:MGL_4052"/>
<dbReference type="VEuPathDB" id="FungiDB:MGL_4052"/>
<dbReference type="InParanoid" id="A8QCV7"/>
<dbReference type="OrthoDB" id="2373480at2759"/>
<dbReference type="Proteomes" id="UP000008837">
    <property type="component" value="Unassembled WGS sequence"/>
</dbReference>
<dbReference type="GO" id="GO:0004806">
    <property type="term" value="F:triacylglycerol lipase activity"/>
    <property type="evidence" value="ECO:0007669"/>
    <property type="project" value="InterPro"/>
</dbReference>
<dbReference type="GO" id="GO:0016042">
    <property type="term" value="P:lipid catabolic process"/>
    <property type="evidence" value="ECO:0007669"/>
    <property type="project" value="UniProtKB-KW"/>
</dbReference>
<dbReference type="Gene3D" id="1.10.260.130">
    <property type="match status" value="1"/>
</dbReference>
<dbReference type="Gene3D" id="3.40.50.1820">
    <property type="entry name" value="alpha/beta hydrolase"/>
    <property type="match status" value="1"/>
</dbReference>
<dbReference type="InterPro" id="IPR029058">
    <property type="entry name" value="AB_hydrolase_fold"/>
</dbReference>
<dbReference type="InterPro" id="IPR005152">
    <property type="entry name" value="Lipase_secreted"/>
</dbReference>
<dbReference type="PANTHER" id="PTHR34853">
    <property type="match status" value="1"/>
</dbReference>
<dbReference type="PANTHER" id="PTHR34853:SF5">
    <property type="entry name" value="LIP-DOMAIN-CONTAINING PROTEIN-RELATED"/>
    <property type="match status" value="1"/>
</dbReference>
<dbReference type="Pfam" id="PF03583">
    <property type="entry name" value="LIP"/>
    <property type="match status" value="1"/>
</dbReference>
<dbReference type="PIRSF" id="PIRSF029171">
    <property type="entry name" value="Esterase_LipA"/>
    <property type="match status" value="1"/>
</dbReference>
<dbReference type="SUPFAM" id="SSF53474">
    <property type="entry name" value="alpha/beta-Hydrolases"/>
    <property type="match status" value="1"/>
</dbReference>
<name>LIP5_MALGO</name>
<protein>
    <recommendedName>
        <fullName evidence="6">Secreted triacylglycerol lipase LIP5</fullName>
        <ecNumber evidence="5">3.1.1.-</ecNumber>
        <ecNumber evidence="5">3.1.1.3</ecNumber>
    </recommendedName>
</protein>
<organism>
    <name type="scientific">Malassezia globosa (strain ATCC MYA-4612 / CBS 7966)</name>
    <name type="common">Dandruff-associated fungus</name>
    <dbReference type="NCBI Taxonomy" id="425265"/>
    <lineage>
        <taxon>Eukaryota</taxon>
        <taxon>Fungi</taxon>
        <taxon>Dikarya</taxon>
        <taxon>Basidiomycota</taxon>
        <taxon>Ustilaginomycotina</taxon>
        <taxon>Malasseziomycetes</taxon>
        <taxon>Malasseziales</taxon>
        <taxon>Malasseziaceae</taxon>
        <taxon>Malassezia</taxon>
    </lineage>
</organism>
<accession>A8QCV7</accession>
<feature type="signal peptide" evidence="2">
    <location>
        <begin position="1"/>
        <end position="19"/>
    </location>
</feature>
<feature type="chain" id="PRO_5002727306" description="Secreted triacylglycerol lipase LIP5">
    <location>
        <begin position="20"/>
        <end position="475"/>
    </location>
</feature>
<feature type="active site" description="Nucleophile" evidence="8">
    <location>
        <position position="213"/>
    </location>
</feature>
<feature type="active site" evidence="8">
    <location>
        <position position="360"/>
    </location>
</feature>
<feature type="active site" evidence="8">
    <location>
        <position position="394"/>
    </location>
</feature>
<feature type="glycosylation site" description="N-linked (GlcNAc...) asparagine" evidence="3">
    <location>
        <position position="246"/>
    </location>
</feature>
<feature type="glycosylation site" description="N-linked (GlcNAc...) asparagine" evidence="3">
    <location>
        <position position="312"/>
    </location>
</feature>
<feature type="glycosylation site" description="N-linked (GlcNAc...) asparagine" evidence="3">
    <location>
        <position position="369"/>
    </location>
</feature>
<feature type="glycosylation site" description="N-linked (GlcNAc...) asparagine" evidence="3">
    <location>
        <position position="471"/>
    </location>
</feature>
<feature type="disulfide bond" evidence="1">
    <location>
        <begin position="129"/>
        <end position="300"/>
    </location>
</feature>
<keyword id="KW-1015">Disulfide bond</keyword>
<keyword id="KW-0325">Glycoprotein</keyword>
<keyword id="KW-0378">Hydrolase</keyword>
<keyword id="KW-0442">Lipid degradation</keyword>
<keyword id="KW-0443">Lipid metabolism</keyword>
<keyword id="KW-1185">Reference proteome</keyword>
<keyword id="KW-0732">Signal</keyword>
<keyword id="KW-0843">Virulence</keyword>
<evidence type="ECO:0000250" key="1">
    <source>
        <dbReference type="UniProtKB" id="W3VKA4"/>
    </source>
</evidence>
<evidence type="ECO:0000255" key="2"/>
<evidence type="ECO:0000255" key="3">
    <source>
        <dbReference type="PROSITE-ProRule" id="PRU00498"/>
    </source>
</evidence>
<evidence type="ECO:0000269" key="4">
    <source>
    </source>
</evidence>
<evidence type="ECO:0000269" key="5">
    <source>
    </source>
</evidence>
<evidence type="ECO:0000303" key="6">
    <source>
    </source>
</evidence>
<evidence type="ECO:0000305" key="7"/>
<evidence type="ECO:0000305" key="8">
    <source>
    </source>
</evidence>
<comment type="function">
    <text evidence="4 5">Secreted lipase involved in Dandruff and seborrheic dermatitis (D/SD) probably via lipase-mediated breakdown of sebaceous lipids and release of irritating free fatty acids (PubMed:18000048). Has triacylglycerol lipase activity and is able to hydrolyze triolein (PubMed:27130210). Mostly converts monoolein to di- and triolein, while free fatty acids are only produced in low amounts (PubMed:27130210).</text>
</comment>
<comment type="catalytic activity">
    <reaction evidence="5">
        <text>a triacylglycerol + H2O = a diacylglycerol + a fatty acid + H(+)</text>
        <dbReference type="Rhea" id="RHEA:12044"/>
        <dbReference type="ChEBI" id="CHEBI:15377"/>
        <dbReference type="ChEBI" id="CHEBI:15378"/>
        <dbReference type="ChEBI" id="CHEBI:17855"/>
        <dbReference type="ChEBI" id="CHEBI:18035"/>
        <dbReference type="ChEBI" id="CHEBI:28868"/>
        <dbReference type="EC" id="3.1.1.3"/>
    </reaction>
</comment>
<comment type="catalytic activity">
    <reaction evidence="5">
        <text>a monoacylglycerol + H2O = glycerol + a fatty acid + H(+)</text>
        <dbReference type="Rhea" id="RHEA:15245"/>
        <dbReference type="ChEBI" id="CHEBI:15377"/>
        <dbReference type="ChEBI" id="CHEBI:15378"/>
        <dbReference type="ChEBI" id="CHEBI:17408"/>
        <dbReference type="ChEBI" id="CHEBI:17754"/>
        <dbReference type="ChEBI" id="CHEBI:28868"/>
    </reaction>
</comment>
<comment type="catalytic activity">
    <reaction evidence="5">
        <text>a diacylglycerol + H2O = a monoacylglycerol + a fatty acid + H(+)</text>
        <dbReference type="Rhea" id="RHEA:32731"/>
        <dbReference type="ChEBI" id="CHEBI:15377"/>
        <dbReference type="ChEBI" id="CHEBI:15378"/>
        <dbReference type="ChEBI" id="CHEBI:17408"/>
        <dbReference type="ChEBI" id="CHEBI:18035"/>
        <dbReference type="ChEBI" id="CHEBI:28868"/>
    </reaction>
</comment>
<comment type="similarity">
    <text evidence="7">Belongs to the AB hydrolase superfamily. Lipase family. Class Lip subfamily.</text>
</comment>
<proteinExistence type="evidence at protein level"/>
<sequence length="475" mass="52078">MYPCTLLMVLLCLAIMTHGHIQIHGTGMRRNRRDSPHPPSPIYDSFYVPKKGWDETKPGTVLASRNIQAGFTKTQKINLDGAYQLLYRTSGVDDKSPSYSVTTVLVPKNARPNKLVLIMAYEDSNFVECAPSYKIQLGAPLETNPIQTVEELMWTSVLNDGWTVTIPDHQGPLSAFSSSFIHGHASLDAIRATLNFEQLKLDPKSAVVGMGYSGGAIAGGWAASLLGSYATELNVVGWSIGGTPSNVTGTFYGLDGSLFSGFSVAGVAGIVDSYPEVNDYVGSVITPAGNAALQFTREHCMGDIVVGLQNVNLTGKDFVKNEKNFLTDKRIAPILDHLTMGTDSKLTPKVPVYMYHALHDEVIPFDRANQTANAWCKGGANLLFQEYTGIEMGHVSTEVLNTPFVLKFIRDRMSGREFLNGCQWKSDLNPLWRPDILGARLTEVFNSILNFFGTSVGRTDRIIQESIINHNFTSK</sequence>